<feature type="chain" id="PRO_0000054335" description="Alpha-glucosidase">
    <location>
        <begin position="1"/>
        <end position="557"/>
    </location>
</feature>
<feature type="active site" description="Nucleophile" evidence="1">
    <location>
        <position position="201"/>
    </location>
</feature>
<feature type="active site" description="Proton donor" evidence="1">
    <location>
        <position position="256"/>
    </location>
</feature>
<feature type="site" description="Transition state stabilizer" evidence="1">
    <location>
        <position position="332"/>
    </location>
</feature>
<evidence type="ECO:0000250" key="1"/>
<evidence type="ECO:0000305" key="2"/>
<gene>
    <name type="primary">agl</name>
</gene>
<keyword id="KW-0326">Glycosidase</keyword>
<keyword id="KW-0378">Hydrolase</keyword>
<protein>
    <recommendedName>
        <fullName>Alpha-glucosidase</fullName>
        <ecNumber>3.2.1.20</ecNumber>
    </recommendedName>
    <alternativeName>
        <fullName>Maltase</fullName>
    </alternativeName>
</protein>
<sequence>MAATIKWWQQAVVYQVYPRSFQDTNHDGIGDLKGITAHLDYLKQLGIDVIWLNPIYRSPNDDNGYDISDYQQIAADFGTMADFDELLQAAHDRGLKIIMDLVVNHTSDEHPRFKRSRQDRTNQYRDFYFWRSGNGKKAPNNWEAAFGGSAWQYDEQTQQYYLHTFSTKQPDLNWENPTLRESVYTMMTWWLNKGVDGFRMDVINQISKLPGLPDGPLKPHSQFGDARVTNGPRVHEFLQEMNQEVLSQFDIMTVGETHGVTPADALKYAGADQHELDMVFEFQHLRLDNSQHGLGKWSTRKTPLVALKKVISDWQVGLEGRAWNSLFWNNHDTPRAVSRFGDDRPAYRVRSAKMLATCLHLLQGTPYIYQGEELGMTDAHFTELASYRDIESLSAYRDLVTERQLLSPADMMARLAAASRDNSRTPMQWDTEVNAGFSDAAPWLTVNPNYRQINAAAALADPDSVWYYYQHLIQLRHQYPSVTLGSFELLWADDPQYSYMHGNGKADLASLLQFHSRDTVPTTGSISDPTAKCLISNYGEQQPNKLRPYEAWVYQLA</sequence>
<name>AGL_PEDPE</name>
<dbReference type="EC" id="3.2.1.20"/>
<dbReference type="EMBL" id="Z32771">
    <property type="protein sequence ID" value="CAA83671.1"/>
    <property type="molecule type" value="Genomic_DNA"/>
</dbReference>
<dbReference type="EMBL" id="L32093">
    <property type="protein sequence ID" value="AAA25570.1"/>
    <property type="molecule type" value="Genomic_DNA"/>
</dbReference>
<dbReference type="PIR" id="S77969">
    <property type="entry name" value="S77969"/>
</dbReference>
<dbReference type="SMR" id="P43473"/>
<dbReference type="CAZy" id="GH13">
    <property type="family name" value="Glycoside Hydrolase Family 13"/>
</dbReference>
<dbReference type="GO" id="GO:0004558">
    <property type="term" value="F:alpha-1,4-glucosidase activity"/>
    <property type="evidence" value="ECO:0007669"/>
    <property type="project" value="UniProtKB-EC"/>
</dbReference>
<dbReference type="GO" id="GO:0004556">
    <property type="term" value="F:alpha-amylase activity"/>
    <property type="evidence" value="ECO:0007669"/>
    <property type="project" value="TreeGrafter"/>
</dbReference>
<dbReference type="GO" id="GO:0009313">
    <property type="term" value="P:oligosaccharide catabolic process"/>
    <property type="evidence" value="ECO:0007669"/>
    <property type="project" value="TreeGrafter"/>
</dbReference>
<dbReference type="CDD" id="cd11333">
    <property type="entry name" value="AmyAc_SI_OligoGlu_DGase"/>
    <property type="match status" value="1"/>
</dbReference>
<dbReference type="FunFam" id="3.20.20.80:FF:000064">
    <property type="entry name" value="Oligo-1,6-glucosidase"/>
    <property type="match status" value="2"/>
</dbReference>
<dbReference type="FunFam" id="3.90.400.10:FF:000002">
    <property type="entry name" value="Sucrose isomerase"/>
    <property type="match status" value="1"/>
</dbReference>
<dbReference type="Gene3D" id="3.20.20.80">
    <property type="entry name" value="Glycosidases"/>
    <property type="match status" value="1"/>
</dbReference>
<dbReference type="Gene3D" id="2.60.40.1180">
    <property type="entry name" value="Golgi alpha-mannosidase II"/>
    <property type="match status" value="1"/>
</dbReference>
<dbReference type="Gene3D" id="3.90.400.10">
    <property type="entry name" value="Oligo-1,6-glucosidase, Domain 2"/>
    <property type="match status" value="1"/>
</dbReference>
<dbReference type="InterPro" id="IPR006047">
    <property type="entry name" value="Glyco_hydro_13_cat_dom"/>
</dbReference>
<dbReference type="InterPro" id="IPR013780">
    <property type="entry name" value="Glyco_hydro_b"/>
</dbReference>
<dbReference type="InterPro" id="IPR017853">
    <property type="entry name" value="Glycoside_hydrolase_SF"/>
</dbReference>
<dbReference type="InterPro" id="IPR045857">
    <property type="entry name" value="O16G_dom_2"/>
</dbReference>
<dbReference type="NCBIfam" id="NF008183">
    <property type="entry name" value="PRK10933.1"/>
    <property type="match status" value="1"/>
</dbReference>
<dbReference type="PANTHER" id="PTHR10357">
    <property type="entry name" value="ALPHA-AMYLASE FAMILY MEMBER"/>
    <property type="match status" value="1"/>
</dbReference>
<dbReference type="PANTHER" id="PTHR10357:SF184">
    <property type="entry name" value="OLIGO-1,6-GLUCOSIDASE 1"/>
    <property type="match status" value="1"/>
</dbReference>
<dbReference type="Pfam" id="PF00128">
    <property type="entry name" value="Alpha-amylase"/>
    <property type="match status" value="1"/>
</dbReference>
<dbReference type="SMART" id="SM00642">
    <property type="entry name" value="Aamy"/>
    <property type="match status" value="1"/>
</dbReference>
<dbReference type="SUPFAM" id="SSF51445">
    <property type="entry name" value="(Trans)glycosidases"/>
    <property type="match status" value="1"/>
</dbReference>
<proteinExistence type="inferred from homology"/>
<reference key="1">
    <citation type="submission" date="1994-04" db="EMBL/GenBank/DDBJ databases">
        <title>The sucrose and raffinose operons of Pediococcus pentosaceus PPE1.0.</title>
        <authorList>
            <person name="Leenhouts K.K.J."/>
            <person name="Bolhuis A.A."/>
            <person name="Kok J.J."/>
            <person name="Venema G.G."/>
        </authorList>
    </citation>
    <scope>NUCLEOTIDE SEQUENCE [GENOMIC DNA]</scope>
    <source>
        <strain>PPE1.0</strain>
    </source>
</reference>
<accession>P43473</accession>
<organism>
    <name type="scientific">Pediococcus pentosaceus</name>
    <dbReference type="NCBI Taxonomy" id="1255"/>
    <lineage>
        <taxon>Bacteria</taxon>
        <taxon>Bacillati</taxon>
        <taxon>Bacillota</taxon>
        <taxon>Bacilli</taxon>
        <taxon>Lactobacillales</taxon>
        <taxon>Lactobacillaceae</taxon>
        <taxon>Pediococcus</taxon>
    </lineage>
</organism>
<comment type="catalytic activity">
    <reaction>
        <text>Hydrolysis of terminal, non-reducing (1-&gt;4)-linked alpha-D-glucose residues with release of alpha-D-glucose.</text>
        <dbReference type="EC" id="3.2.1.20"/>
    </reaction>
</comment>
<comment type="similarity">
    <text evidence="2">Belongs to the glycosyl hydrolase 13 family.</text>
</comment>